<protein>
    <recommendedName>
        <fullName>Coordinator of PRMT5 and differentiation stimulator</fullName>
    </recommendedName>
    <alternativeName>
        <fullName>Cooperator of PRMT5</fullName>
    </alternativeName>
</protein>
<gene>
    <name type="primary">Coprs</name>
    <name type="synonym">Copr5</name>
</gene>
<name>COPRS_MOUSE</name>
<proteinExistence type="evidence at protein level"/>
<feature type="chain" id="PRO_0000336078" description="Coordinator of PRMT5 and differentiation stimulator">
    <location>
        <begin position="1"/>
        <end position="173"/>
    </location>
</feature>
<feature type="region of interest" description="Disordered" evidence="3">
    <location>
        <begin position="1"/>
        <end position="70"/>
    </location>
</feature>
<feature type="modified residue" description="N-acetylmethionine" evidence="2">
    <location>
        <position position="1"/>
    </location>
</feature>
<feature type="modified residue" description="Phosphoserine" evidence="5">
    <location>
        <position position="64"/>
    </location>
</feature>
<feature type="modified residue" description="Phosphoserine" evidence="5">
    <location>
        <position position="65"/>
    </location>
</feature>
<comment type="function">
    <text evidence="1 4">Histone-binding protein required for histone H4 methyltransferase activity of PRMT5. Specifically required for histone H4 'Arg-3' methylation mediated by PRMT5, but not histone H3 'Arg-8' methylation, suggesting that it modulates the substrate specificity of PRMT5. Specifically interacts with the N-terminus of histone H4 but not with histone H3, suggesting that it acts by promoting the association between histone H4 and PRMT5. Involved in CCNE1 promoter repression (By similarity). Plays a role in muscle cell differentiation by modulating the recruitment of PRMT5 to the promoter of genes involved in the coordination between cell cycle exit and muscle differentiation.</text>
</comment>
<comment type="subunit">
    <text evidence="1 4">Interacts with PRMT5. Interacts with histone H4; specifically interacts with the N-terminus of histone H4 but not with histone H3 (By similarity). Interacts with CBFB. Found in a complex with PRMT5, RUNX1 and CBFB.</text>
</comment>
<comment type="subcellular location">
    <subcellularLocation>
        <location evidence="1">Nucleus</location>
    </subcellularLocation>
</comment>
<keyword id="KW-0007">Acetylation</keyword>
<keyword id="KW-0156">Chromatin regulator</keyword>
<keyword id="KW-0517">Myogenesis</keyword>
<keyword id="KW-0539">Nucleus</keyword>
<keyword id="KW-0597">Phosphoprotein</keyword>
<keyword id="KW-1185">Reference proteome</keyword>
<keyword id="KW-0804">Transcription</keyword>
<keyword id="KW-0805">Transcription regulation</keyword>
<sequence length="173" mass="18666">MDPQAATGRGPGERSSQEAPSAEAGFATADLSGRETETELAVDRLASGAQSIPADIPAHAEGPSSEEEGFAVEKEADGELYAWELSEGPSCPPMEQAADLFNEDWDLELKADQGNPYDADDIQGSISQEIKPWVCCAPQGDMIYDPSWHHPPPLIPHYSKMVFETGQFDDAED</sequence>
<dbReference type="EMBL" id="AK008882">
    <property type="protein sequence ID" value="BAB25950.1"/>
    <property type="molecule type" value="mRNA"/>
</dbReference>
<dbReference type="EMBL" id="AK010573">
    <property type="protein sequence ID" value="BAB27036.1"/>
    <property type="molecule type" value="mRNA"/>
</dbReference>
<dbReference type="EMBL" id="BC029192">
    <property type="protein sequence ID" value="AAH29192.1"/>
    <property type="molecule type" value="mRNA"/>
</dbReference>
<dbReference type="CCDS" id="CCDS40237.1"/>
<dbReference type="RefSeq" id="NP_079832.1">
    <property type="nucleotide sequence ID" value="NM_025556.3"/>
</dbReference>
<dbReference type="BioGRID" id="211464">
    <property type="interactions" value="4"/>
</dbReference>
<dbReference type="FunCoup" id="Q9CQ13">
    <property type="interactions" value="697"/>
</dbReference>
<dbReference type="STRING" id="10090.ENSMUSP00000033839"/>
<dbReference type="GlyGen" id="Q9CQ13">
    <property type="glycosylation" value="1 site, 1 O-linked glycan (1 site)"/>
</dbReference>
<dbReference type="iPTMnet" id="Q9CQ13"/>
<dbReference type="PhosphoSitePlus" id="Q9CQ13"/>
<dbReference type="SwissPalm" id="Q9CQ13"/>
<dbReference type="PaxDb" id="10090-ENSMUSP00000033839"/>
<dbReference type="PeptideAtlas" id="Q9CQ13"/>
<dbReference type="ProteomicsDB" id="285264"/>
<dbReference type="Pumba" id="Q9CQ13"/>
<dbReference type="Antibodypedia" id="65565">
    <property type="antibodies" value="5 antibodies from 5 providers"/>
</dbReference>
<dbReference type="Ensembl" id="ENSMUST00000033839.9">
    <property type="protein sequence ID" value="ENSMUSP00000033839.8"/>
    <property type="gene ID" value="ENSMUSG00000031458.9"/>
</dbReference>
<dbReference type="GeneID" id="66423"/>
<dbReference type="KEGG" id="mmu:66423"/>
<dbReference type="UCSC" id="uc009kyr.2">
    <property type="organism name" value="mouse"/>
</dbReference>
<dbReference type="AGR" id="MGI:1913673"/>
<dbReference type="CTD" id="55352"/>
<dbReference type="MGI" id="MGI:1913673">
    <property type="gene designation" value="Coprs"/>
</dbReference>
<dbReference type="VEuPathDB" id="HostDB:ENSMUSG00000031458"/>
<dbReference type="eggNOG" id="ENOG502ST7I">
    <property type="taxonomic scope" value="Eukaryota"/>
</dbReference>
<dbReference type="GeneTree" id="ENSGT00390000007384"/>
<dbReference type="HOGENOM" id="CLU_126074_0_0_1"/>
<dbReference type="InParanoid" id="Q9CQ13"/>
<dbReference type="OMA" id="IPTHGED"/>
<dbReference type="OrthoDB" id="9451728at2759"/>
<dbReference type="PhylomeDB" id="Q9CQ13"/>
<dbReference type="TreeFam" id="TF338109"/>
<dbReference type="Reactome" id="R-MMU-3214858">
    <property type="pathway name" value="RMTs methylate histone arginines"/>
</dbReference>
<dbReference type="BioGRID-ORCS" id="66423">
    <property type="hits" value="0 hits in 76 CRISPR screens"/>
</dbReference>
<dbReference type="ChiTaRS" id="Coprs">
    <property type="organism name" value="mouse"/>
</dbReference>
<dbReference type="PRO" id="PR:Q9CQ13"/>
<dbReference type="Proteomes" id="UP000000589">
    <property type="component" value="Chromosome 8"/>
</dbReference>
<dbReference type="RNAct" id="Q9CQ13">
    <property type="molecule type" value="protein"/>
</dbReference>
<dbReference type="Bgee" id="ENSMUSG00000031458">
    <property type="expression patterns" value="Expressed in facial nucleus and 257 other cell types or tissues"/>
</dbReference>
<dbReference type="ExpressionAtlas" id="Q9CQ13">
    <property type="expression patterns" value="baseline and differential"/>
</dbReference>
<dbReference type="GO" id="GO:0005634">
    <property type="term" value="C:nucleus"/>
    <property type="evidence" value="ECO:0000250"/>
    <property type="project" value="UniProtKB"/>
</dbReference>
<dbReference type="GO" id="GO:0042393">
    <property type="term" value="F:histone binding"/>
    <property type="evidence" value="ECO:0000250"/>
    <property type="project" value="UniProtKB"/>
</dbReference>
<dbReference type="GO" id="GO:0001835">
    <property type="term" value="P:blastocyst hatching"/>
    <property type="evidence" value="ECO:0000315"/>
    <property type="project" value="MGI"/>
</dbReference>
<dbReference type="GO" id="GO:0006338">
    <property type="term" value="P:chromatin remodeling"/>
    <property type="evidence" value="ECO:0000250"/>
    <property type="project" value="UniProtKB"/>
</dbReference>
<dbReference type="GO" id="GO:0007517">
    <property type="term" value="P:muscle organ development"/>
    <property type="evidence" value="ECO:0000315"/>
    <property type="project" value="UniProtKB"/>
</dbReference>
<dbReference type="InterPro" id="IPR029289">
    <property type="entry name" value="COPR5"/>
</dbReference>
<dbReference type="PANTHER" id="PTHR36461">
    <property type="entry name" value="COORDINATOR OF PRMT5 AND DIFFERENTIATION STIMULATOR"/>
    <property type="match status" value="1"/>
</dbReference>
<dbReference type="PANTHER" id="PTHR36461:SF1">
    <property type="entry name" value="COORDINATOR OF PRMT5 AND DIFFERENTIATION STIMULATOR"/>
    <property type="match status" value="1"/>
</dbReference>
<dbReference type="Pfam" id="PF15340">
    <property type="entry name" value="COPR5"/>
    <property type="match status" value="1"/>
</dbReference>
<organism>
    <name type="scientific">Mus musculus</name>
    <name type="common">Mouse</name>
    <dbReference type="NCBI Taxonomy" id="10090"/>
    <lineage>
        <taxon>Eukaryota</taxon>
        <taxon>Metazoa</taxon>
        <taxon>Chordata</taxon>
        <taxon>Craniata</taxon>
        <taxon>Vertebrata</taxon>
        <taxon>Euteleostomi</taxon>
        <taxon>Mammalia</taxon>
        <taxon>Eutheria</taxon>
        <taxon>Euarchontoglires</taxon>
        <taxon>Glires</taxon>
        <taxon>Rodentia</taxon>
        <taxon>Myomorpha</taxon>
        <taxon>Muroidea</taxon>
        <taxon>Muridae</taxon>
        <taxon>Murinae</taxon>
        <taxon>Mus</taxon>
        <taxon>Mus</taxon>
    </lineage>
</organism>
<evidence type="ECO:0000250" key="1"/>
<evidence type="ECO:0000250" key="2">
    <source>
        <dbReference type="UniProtKB" id="Q9NQ92"/>
    </source>
</evidence>
<evidence type="ECO:0000256" key="3">
    <source>
        <dbReference type="SAM" id="MobiDB-lite"/>
    </source>
</evidence>
<evidence type="ECO:0000269" key="4">
    <source>
    </source>
</evidence>
<evidence type="ECO:0007744" key="5">
    <source>
    </source>
</evidence>
<reference key="1">
    <citation type="journal article" date="2005" name="Science">
        <title>The transcriptional landscape of the mammalian genome.</title>
        <authorList>
            <person name="Carninci P."/>
            <person name="Kasukawa T."/>
            <person name="Katayama S."/>
            <person name="Gough J."/>
            <person name="Frith M.C."/>
            <person name="Maeda N."/>
            <person name="Oyama R."/>
            <person name="Ravasi T."/>
            <person name="Lenhard B."/>
            <person name="Wells C."/>
            <person name="Kodzius R."/>
            <person name="Shimokawa K."/>
            <person name="Bajic V.B."/>
            <person name="Brenner S.E."/>
            <person name="Batalov S."/>
            <person name="Forrest A.R."/>
            <person name="Zavolan M."/>
            <person name="Davis M.J."/>
            <person name="Wilming L.G."/>
            <person name="Aidinis V."/>
            <person name="Allen J.E."/>
            <person name="Ambesi-Impiombato A."/>
            <person name="Apweiler R."/>
            <person name="Aturaliya R.N."/>
            <person name="Bailey T.L."/>
            <person name="Bansal M."/>
            <person name="Baxter L."/>
            <person name="Beisel K.W."/>
            <person name="Bersano T."/>
            <person name="Bono H."/>
            <person name="Chalk A.M."/>
            <person name="Chiu K.P."/>
            <person name="Choudhary V."/>
            <person name="Christoffels A."/>
            <person name="Clutterbuck D.R."/>
            <person name="Crowe M.L."/>
            <person name="Dalla E."/>
            <person name="Dalrymple B.P."/>
            <person name="de Bono B."/>
            <person name="Della Gatta G."/>
            <person name="di Bernardo D."/>
            <person name="Down T."/>
            <person name="Engstrom P."/>
            <person name="Fagiolini M."/>
            <person name="Faulkner G."/>
            <person name="Fletcher C.F."/>
            <person name="Fukushima T."/>
            <person name="Furuno M."/>
            <person name="Futaki S."/>
            <person name="Gariboldi M."/>
            <person name="Georgii-Hemming P."/>
            <person name="Gingeras T.R."/>
            <person name="Gojobori T."/>
            <person name="Green R.E."/>
            <person name="Gustincich S."/>
            <person name="Harbers M."/>
            <person name="Hayashi Y."/>
            <person name="Hensch T.K."/>
            <person name="Hirokawa N."/>
            <person name="Hill D."/>
            <person name="Huminiecki L."/>
            <person name="Iacono M."/>
            <person name="Ikeo K."/>
            <person name="Iwama A."/>
            <person name="Ishikawa T."/>
            <person name="Jakt M."/>
            <person name="Kanapin A."/>
            <person name="Katoh M."/>
            <person name="Kawasawa Y."/>
            <person name="Kelso J."/>
            <person name="Kitamura H."/>
            <person name="Kitano H."/>
            <person name="Kollias G."/>
            <person name="Krishnan S.P."/>
            <person name="Kruger A."/>
            <person name="Kummerfeld S.K."/>
            <person name="Kurochkin I.V."/>
            <person name="Lareau L.F."/>
            <person name="Lazarevic D."/>
            <person name="Lipovich L."/>
            <person name="Liu J."/>
            <person name="Liuni S."/>
            <person name="McWilliam S."/>
            <person name="Madan Babu M."/>
            <person name="Madera M."/>
            <person name="Marchionni L."/>
            <person name="Matsuda H."/>
            <person name="Matsuzawa S."/>
            <person name="Miki H."/>
            <person name="Mignone F."/>
            <person name="Miyake S."/>
            <person name="Morris K."/>
            <person name="Mottagui-Tabar S."/>
            <person name="Mulder N."/>
            <person name="Nakano N."/>
            <person name="Nakauchi H."/>
            <person name="Ng P."/>
            <person name="Nilsson R."/>
            <person name="Nishiguchi S."/>
            <person name="Nishikawa S."/>
            <person name="Nori F."/>
            <person name="Ohara O."/>
            <person name="Okazaki Y."/>
            <person name="Orlando V."/>
            <person name="Pang K.C."/>
            <person name="Pavan W.J."/>
            <person name="Pavesi G."/>
            <person name="Pesole G."/>
            <person name="Petrovsky N."/>
            <person name="Piazza S."/>
            <person name="Reed J."/>
            <person name="Reid J.F."/>
            <person name="Ring B.Z."/>
            <person name="Ringwald M."/>
            <person name="Rost B."/>
            <person name="Ruan Y."/>
            <person name="Salzberg S.L."/>
            <person name="Sandelin A."/>
            <person name="Schneider C."/>
            <person name="Schoenbach C."/>
            <person name="Sekiguchi K."/>
            <person name="Semple C.A."/>
            <person name="Seno S."/>
            <person name="Sessa L."/>
            <person name="Sheng Y."/>
            <person name="Shibata Y."/>
            <person name="Shimada H."/>
            <person name="Shimada K."/>
            <person name="Silva D."/>
            <person name="Sinclair B."/>
            <person name="Sperling S."/>
            <person name="Stupka E."/>
            <person name="Sugiura K."/>
            <person name="Sultana R."/>
            <person name="Takenaka Y."/>
            <person name="Taki K."/>
            <person name="Tammoja K."/>
            <person name="Tan S.L."/>
            <person name="Tang S."/>
            <person name="Taylor M.S."/>
            <person name="Tegner J."/>
            <person name="Teichmann S.A."/>
            <person name="Ueda H.R."/>
            <person name="van Nimwegen E."/>
            <person name="Verardo R."/>
            <person name="Wei C.L."/>
            <person name="Yagi K."/>
            <person name="Yamanishi H."/>
            <person name="Zabarovsky E."/>
            <person name="Zhu S."/>
            <person name="Zimmer A."/>
            <person name="Hide W."/>
            <person name="Bult C."/>
            <person name="Grimmond S.M."/>
            <person name="Teasdale R.D."/>
            <person name="Liu E.T."/>
            <person name="Brusic V."/>
            <person name="Quackenbush J."/>
            <person name="Wahlestedt C."/>
            <person name="Mattick J.S."/>
            <person name="Hume D.A."/>
            <person name="Kai C."/>
            <person name="Sasaki D."/>
            <person name="Tomaru Y."/>
            <person name="Fukuda S."/>
            <person name="Kanamori-Katayama M."/>
            <person name="Suzuki M."/>
            <person name="Aoki J."/>
            <person name="Arakawa T."/>
            <person name="Iida J."/>
            <person name="Imamura K."/>
            <person name="Itoh M."/>
            <person name="Kato T."/>
            <person name="Kawaji H."/>
            <person name="Kawagashira N."/>
            <person name="Kawashima T."/>
            <person name="Kojima M."/>
            <person name="Kondo S."/>
            <person name="Konno H."/>
            <person name="Nakano K."/>
            <person name="Ninomiya N."/>
            <person name="Nishio T."/>
            <person name="Okada M."/>
            <person name="Plessy C."/>
            <person name="Shibata K."/>
            <person name="Shiraki T."/>
            <person name="Suzuki S."/>
            <person name="Tagami M."/>
            <person name="Waki K."/>
            <person name="Watahiki A."/>
            <person name="Okamura-Oho Y."/>
            <person name="Suzuki H."/>
            <person name="Kawai J."/>
            <person name="Hayashizaki Y."/>
        </authorList>
    </citation>
    <scope>NUCLEOTIDE SEQUENCE [LARGE SCALE MRNA]</scope>
    <source>
        <strain>C57BL/6J</strain>
        <tissue>Embryonic stem cell</tissue>
        <tissue>Stomach</tissue>
    </source>
</reference>
<reference key="2">
    <citation type="journal article" date="2004" name="Genome Res.">
        <title>The status, quality, and expansion of the NIH full-length cDNA project: the Mammalian Gene Collection (MGC).</title>
        <authorList>
            <consortium name="The MGC Project Team"/>
        </authorList>
    </citation>
    <scope>NUCLEOTIDE SEQUENCE [LARGE SCALE MRNA]</scope>
    <source>
        <strain>FVB/N</strain>
        <tissue>Mammary tumor</tissue>
    </source>
</reference>
<reference key="3">
    <citation type="journal article" date="2010" name="Cell">
        <title>A tissue-specific atlas of mouse protein phosphorylation and expression.</title>
        <authorList>
            <person name="Huttlin E.L."/>
            <person name="Jedrychowski M.P."/>
            <person name="Elias J.E."/>
            <person name="Goswami T."/>
            <person name="Rad R."/>
            <person name="Beausoleil S.A."/>
            <person name="Villen J."/>
            <person name="Haas W."/>
            <person name="Sowa M.E."/>
            <person name="Gygi S.P."/>
        </authorList>
    </citation>
    <scope>PHOSPHORYLATION [LARGE SCALE ANALYSIS] AT SER-64 AND SER-65</scope>
    <scope>IDENTIFICATION BY MASS SPECTROMETRY [LARGE SCALE ANALYSIS]</scope>
    <source>
        <tissue>Brain</tissue>
        <tissue>Testis</tissue>
    </source>
</reference>
<reference key="4">
    <citation type="journal article" date="2012" name="Cell Death Differ.">
        <title>The histone- and PRMT5-associated protein COPR5 is required for myogenic differentiation.</title>
        <authorList>
            <person name="Paul C."/>
            <person name="Sardet C."/>
            <person name="Fabbrizio E."/>
        </authorList>
    </citation>
    <scope>FUNCTION</scope>
    <scope>INTERACTION WITH PRMT5 AND CBFB</scope>
    <scope>IDENTIFICATION IN A COMPLEX WITH PRMT5; RUNX1 AND CBFB</scope>
</reference>
<accession>Q9CQ13</accession>